<sequence>MIHAERIRNLNGEEPDLRGSYVVYWMQASVRSHWNHALEYAIETANSLKKPLIVVFGLTDDFPNANSRHYRFLIEGLRDVRSNLRERGIQLVVERDSPPSVLLKYADDAAAAVTDRGYLDIQKEWVDEAAGALHIPLTQVESNVIVPVETASDKEEYSAGTFKPKIKRHLKRFMVPLRMRTLKMDSLDLEPGPEFEDAVRDFRAPEDLEPSVFRGGTSTALSIFSEFLREKLECFERYRNDPVKNCLSNMSPYLHFGQISPLYLALRASEAGECPEFLEELIVRRELSMNFVHYSDSYSSISCLPEWAQRTLMDHVADPREYEYSLRELESASTHDPYWNAAQQEMVITGKMHGYMRMYWGKKILEWTDHPARAYDIALYLNDRYEIDGRDPNGFAGVAWCFGKHDRAWAEREIFGKVRYMNDRGLKRKFRIDEYVDRIRGLMDE</sequence>
<evidence type="ECO:0000250" key="1"/>
<evidence type="ECO:0000305" key="2"/>
<name>PHR_METTH</name>
<proteinExistence type="inferred from homology"/>
<comment type="function">
    <text>Involved in repair of UV radiation-induced DNA damage. Catalyzes the light-dependent monomerization (300-600 nm) of cyclobutyl pyrimidine dimers (in cis-syn configuration), which are formed between adjacent bases on the same DNA strand upon exposure to ultraviolet radiation.</text>
</comment>
<comment type="catalytic activity">
    <reaction>
        <text>cyclobutadipyrimidine (in DNA) = 2 pyrimidine residues (in DNA).</text>
        <dbReference type="EC" id="4.1.99.3"/>
    </reaction>
</comment>
<comment type="cofactor">
    <cofactor>
        <name>FAD</name>
        <dbReference type="ChEBI" id="CHEBI:57692"/>
    </cofactor>
    <text>Binds 1 FAD per subunit.</text>
</comment>
<comment type="cofactor">
    <cofactor>
        <name>coenzyme F420-(gamma-Glu)n</name>
        <dbReference type="ChEBI" id="CHEBI:133980"/>
    </cofactor>
    <text>Binds 1 coenzyme F420 non-covalently per subunit.</text>
</comment>
<comment type="similarity">
    <text evidence="2">Belongs to the DNA photolyase class-2 family.</text>
</comment>
<accession>P12769</accession>
<accession>Q50792</accession>
<organism>
    <name type="scientific">Methanothermobacter thermautotrophicus (strain ATCC 29096 / DSM 1053 / JCM 10044 / NBRC 100330 / Delta H)</name>
    <name type="common">Methanobacterium thermoautotrophicum</name>
    <dbReference type="NCBI Taxonomy" id="187420"/>
    <lineage>
        <taxon>Archaea</taxon>
        <taxon>Methanobacteriati</taxon>
        <taxon>Methanobacteriota</taxon>
        <taxon>Methanomada group</taxon>
        <taxon>Methanobacteria</taxon>
        <taxon>Methanobacteriales</taxon>
        <taxon>Methanobacteriaceae</taxon>
        <taxon>Methanothermobacter</taxon>
    </lineage>
</organism>
<dbReference type="EC" id="4.1.99.3"/>
<dbReference type="EMBL" id="D30752">
    <property type="protein sequence ID" value="BAA06411.1"/>
    <property type="molecule type" value="Genomic_DNA"/>
</dbReference>
<dbReference type="EMBL" id="AE000666">
    <property type="protein sequence ID" value="AAB85402.1"/>
    <property type="molecule type" value="Genomic_DNA"/>
</dbReference>
<dbReference type="PIR" id="A69221">
    <property type="entry name" value="A69221"/>
</dbReference>
<dbReference type="RefSeq" id="WP_010876537.1">
    <property type="nucleotide sequence ID" value="NC_000916.1"/>
</dbReference>
<dbReference type="SMR" id="P12769"/>
<dbReference type="STRING" id="187420.MTH_904"/>
<dbReference type="PaxDb" id="187420-MTH_904"/>
<dbReference type="EnsemblBacteria" id="AAB85402">
    <property type="protein sequence ID" value="AAB85402"/>
    <property type="gene ID" value="MTH_904"/>
</dbReference>
<dbReference type="KEGG" id="mth:MTH_904"/>
<dbReference type="PATRIC" id="fig|187420.15.peg.889"/>
<dbReference type="HOGENOM" id="CLU_026342_2_1_2"/>
<dbReference type="InParanoid" id="P12769"/>
<dbReference type="Proteomes" id="UP000005223">
    <property type="component" value="Chromosome"/>
</dbReference>
<dbReference type="GO" id="GO:0003904">
    <property type="term" value="F:deoxyribodipyrimidine photo-lyase activity"/>
    <property type="evidence" value="ECO:0007669"/>
    <property type="project" value="UniProtKB-EC"/>
</dbReference>
<dbReference type="GO" id="GO:0003677">
    <property type="term" value="F:DNA binding"/>
    <property type="evidence" value="ECO:0007669"/>
    <property type="project" value="UniProtKB-KW"/>
</dbReference>
<dbReference type="GO" id="GO:0000719">
    <property type="term" value="P:photoreactive repair"/>
    <property type="evidence" value="ECO:0007669"/>
    <property type="project" value="TreeGrafter"/>
</dbReference>
<dbReference type="FunFam" id="1.10.579.10:FF:000002">
    <property type="entry name" value="Deoxyribodipyrimidine photolyase"/>
    <property type="match status" value="1"/>
</dbReference>
<dbReference type="Gene3D" id="1.25.40.80">
    <property type="match status" value="1"/>
</dbReference>
<dbReference type="Gene3D" id="1.10.579.10">
    <property type="entry name" value="DNA Cyclobutane Dipyrimidine Photolyase, subunit A, domain 3"/>
    <property type="match status" value="1"/>
</dbReference>
<dbReference type="Gene3D" id="3.40.50.620">
    <property type="entry name" value="HUPs"/>
    <property type="match status" value="1"/>
</dbReference>
<dbReference type="InterPro" id="IPR036134">
    <property type="entry name" value="Crypto/Photolyase_FAD-like_sf"/>
</dbReference>
<dbReference type="InterPro" id="IPR036155">
    <property type="entry name" value="Crypto/Photolyase_N_sf"/>
</dbReference>
<dbReference type="InterPro" id="IPR008148">
    <property type="entry name" value="DNA_photolyase_2"/>
</dbReference>
<dbReference type="InterPro" id="IPR032673">
    <property type="entry name" value="DNA_photolyase_2_CS"/>
</dbReference>
<dbReference type="InterPro" id="IPR006050">
    <property type="entry name" value="DNA_photolyase_N"/>
</dbReference>
<dbReference type="InterPro" id="IPR052219">
    <property type="entry name" value="Photolyase_Class-2"/>
</dbReference>
<dbReference type="InterPro" id="IPR014729">
    <property type="entry name" value="Rossmann-like_a/b/a_fold"/>
</dbReference>
<dbReference type="NCBIfam" id="TIGR00591">
    <property type="entry name" value="phr2"/>
    <property type="match status" value="1"/>
</dbReference>
<dbReference type="PANTHER" id="PTHR10211:SF0">
    <property type="entry name" value="DEOXYRIBODIPYRIMIDINE PHOTO-LYASE"/>
    <property type="match status" value="1"/>
</dbReference>
<dbReference type="PANTHER" id="PTHR10211">
    <property type="entry name" value="DEOXYRIBODIPYRIMIDINE PHOTOLYASE"/>
    <property type="match status" value="1"/>
</dbReference>
<dbReference type="Pfam" id="PF00875">
    <property type="entry name" value="DNA_photolyase"/>
    <property type="match status" value="1"/>
</dbReference>
<dbReference type="SUPFAM" id="SSF48173">
    <property type="entry name" value="Cryptochrome/photolyase FAD-binding domain"/>
    <property type="match status" value="1"/>
</dbReference>
<dbReference type="SUPFAM" id="SSF52425">
    <property type="entry name" value="Cryptochrome/photolyase, N-terminal domain"/>
    <property type="match status" value="1"/>
</dbReference>
<dbReference type="PROSITE" id="PS01083">
    <property type="entry name" value="DNA_PHOTOLYASES_2_1"/>
    <property type="match status" value="1"/>
</dbReference>
<dbReference type="PROSITE" id="PS01084">
    <property type="entry name" value="DNA_PHOTOLYASES_2_2"/>
    <property type="match status" value="1"/>
</dbReference>
<dbReference type="PROSITE" id="PS51645">
    <property type="entry name" value="PHR_CRY_ALPHA_BETA"/>
    <property type="match status" value="1"/>
</dbReference>
<keyword id="KW-0157">Chromophore</keyword>
<keyword id="KW-0227">DNA damage</keyword>
<keyword id="KW-0234">DNA repair</keyword>
<keyword id="KW-0238">DNA-binding</keyword>
<keyword id="KW-0274">FAD</keyword>
<keyword id="KW-0285">Flavoprotein</keyword>
<keyword id="KW-0456">Lyase</keyword>
<keyword id="KW-1185">Reference proteome</keyword>
<reference key="1">
    <citation type="journal article" date="1994" name="EMBO J.">
        <title>A new class of DNA photolyases present in various organisms including aplacental mammals.</title>
        <authorList>
            <person name="Yasui A."/>
            <person name="Eker A.P."/>
            <person name="Yasuhira S."/>
            <person name="Yajima H."/>
            <person name="Kobayashi T."/>
            <person name="Takao M."/>
            <person name="Oikawa A."/>
        </authorList>
    </citation>
    <scope>NUCLEOTIDE SEQUENCE [GENOMIC DNA]</scope>
    <source>
        <strain>ATCC 29096 / DSM 1053 / JCM 10044 / NBRC 100330 / Delta H</strain>
    </source>
</reference>
<reference key="2">
    <citation type="journal article" date="1997" name="J. Bacteriol.">
        <title>Complete genome sequence of Methanobacterium thermoautotrophicum deltaH: functional analysis and comparative genomics.</title>
        <authorList>
            <person name="Smith D.R."/>
            <person name="Doucette-Stamm L.A."/>
            <person name="Deloughery C."/>
            <person name="Lee H.-M."/>
            <person name="Dubois J."/>
            <person name="Aldredge T."/>
            <person name="Bashirzadeh R."/>
            <person name="Blakely D."/>
            <person name="Cook R."/>
            <person name="Gilbert K."/>
            <person name="Harrison D."/>
            <person name="Hoang L."/>
            <person name="Keagle P."/>
            <person name="Lumm W."/>
            <person name="Pothier B."/>
            <person name="Qiu D."/>
            <person name="Spadafora R."/>
            <person name="Vicare R."/>
            <person name="Wang Y."/>
            <person name="Wierzbowski J."/>
            <person name="Gibson R."/>
            <person name="Jiwani N."/>
            <person name="Caruso A."/>
            <person name="Bush D."/>
            <person name="Safer H."/>
            <person name="Patwell D."/>
            <person name="Prabhakar S."/>
            <person name="McDougall S."/>
            <person name="Shimer G."/>
            <person name="Goyal A."/>
            <person name="Pietrovski S."/>
            <person name="Church G.M."/>
            <person name="Daniels C.J."/>
            <person name="Mao J.-I."/>
            <person name="Rice P."/>
            <person name="Noelling J."/>
            <person name="Reeve J.N."/>
        </authorList>
    </citation>
    <scope>NUCLEOTIDE SEQUENCE [LARGE SCALE GENOMIC DNA]</scope>
    <source>
        <strain>ATCC 29096 / DSM 1053 / JCM 10044 / NBRC 100330 / Delta H</strain>
    </source>
</reference>
<gene>
    <name type="primary">phr</name>
    <name type="ordered locus">MTH_904</name>
</gene>
<feature type="chain" id="PRO_0000085117" description="Deoxyribodipyrimidine photo-lyase">
    <location>
        <begin position="1"/>
        <end position="445"/>
    </location>
</feature>
<feature type="domain" description="Photolyase/cryptochrome alpha/beta">
    <location>
        <begin position="20"/>
        <end position="148"/>
    </location>
</feature>
<feature type="binding site" evidence="1">
    <location>
        <position position="239"/>
    </location>
    <ligand>
        <name>DNA</name>
        <dbReference type="ChEBI" id="CHEBI:16991"/>
    </ligand>
</feature>
<protein>
    <recommendedName>
        <fullName>Deoxyribodipyrimidine photo-lyase</fullName>
        <ecNumber>4.1.99.3</ecNumber>
    </recommendedName>
    <alternativeName>
        <fullName>DNA photolyase</fullName>
    </alternativeName>
    <alternativeName>
        <fullName>Photoreactivating enzyme</fullName>
    </alternativeName>
</protein>